<gene>
    <name evidence="14" type="primary">TFB1M</name>
    <name evidence="12" type="ORF">CGI-75</name>
</gene>
<reference key="1">
    <citation type="journal article" date="2000" name="Genome Res.">
        <title>Identification of novel human genes evolutionarily conserved in Caenorhabditis elegans by comparative proteomics.</title>
        <authorList>
            <person name="Lai C.-H."/>
            <person name="Chou C.-Y."/>
            <person name="Ch'ang L.-Y."/>
            <person name="Liu C.-S."/>
            <person name="Lin W.-C."/>
        </authorList>
    </citation>
    <scope>NUCLEOTIDE SEQUENCE [LARGE SCALE MRNA]</scope>
</reference>
<reference key="2">
    <citation type="journal article" date="2003" name="Nature">
        <title>The DNA sequence and analysis of human chromosome 6.</title>
        <authorList>
            <person name="Mungall A.J."/>
            <person name="Palmer S.A."/>
            <person name="Sims S.K."/>
            <person name="Edwards C.A."/>
            <person name="Ashurst J.L."/>
            <person name="Wilming L."/>
            <person name="Jones M.C."/>
            <person name="Horton R."/>
            <person name="Hunt S.E."/>
            <person name="Scott C.E."/>
            <person name="Gilbert J.G.R."/>
            <person name="Clamp M.E."/>
            <person name="Bethel G."/>
            <person name="Milne S."/>
            <person name="Ainscough R."/>
            <person name="Almeida J.P."/>
            <person name="Ambrose K.D."/>
            <person name="Andrews T.D."/>
            <person name="Ashwell R.I.S."/>
            <person name="Babbage A.K."/>
            <person name="Bagguley C.L."/>
            <person name="Bailey J."/>
            <person name="Banerjee R."/>
            <person name="Barker D.J."/>
            <person name="Barlow K.F."/>
            <person name="Bates K."/>
            <person name="Beare D.M."/>
            <person name="Beasley H."/>
            <person name="Beasley O."/>
            <person name="Bird C.P."/>
            <person name="Blakey S.E."/>
            <person name="Bray-Allen S."/>
            <person name="Brook J."/>
            <person name="Brown A.J."/>
            <person name="Brown J.Y."/>
            <person name="Burford D.C."/>
            <person name="Burrill W."/>
            <person name="Burton J."/>
            <person name="Carder C."/>
            <person name="Carter N.P."/>
            <person name="Chapman J.C."/>
            <person name="Clark S.Y."/>
            <person name="Clark G."/>
            <person name="Clee C.M."/>
            <person name="Clegg S."/>
            <person name="Cobley V."/>
            <person name="Collier R.E."/>
            <person name="Collins J.E."/>
            <person name="Colman L.K."/>
            <person name="Corby N.R."/>
            <person name="Coville G.J."/>
            <person name="Culley K.M."/>
            <person name="Dhami P."/>
            <person name="Davies J."/>
            <person name="Dunn M."/>
            <person name="Earthrowl M.E."/>
            <person name="Ellington A.E."/>
            <person name="Evans K.A."/>
            <person name="Faulkner L."/>
            <person name="Francis M.D."/>
            <person name="Frankish A."/>
            <person name="Frankland J."/>
            <person name="French L."/>
            <person name="Garner P."/>
            <person name="Garnett J."/>
            <person name="Ghori M.J."/>
            <person name="Gilby L.M."/>
            <person name="Gillson C.J."/>
            <person name="Glithero R.J."/>
            <person name="Grafham D.V."/>
            <person name="Grant M."/>
            <person name="Gribble S."/>
            <person name="Griffiths C."/>
            <person name="Griffiths M.N.D."/>
            <person name="Hall R."/>
            <person name="Halls K.S."/>
            <person name="Hammond S."/>
            <person name="Harley J.L."/>
            <person name="Hart E.A."/>
            <person name="Heath P.D."/>
            <person name="Heathcott R."/>
            <person name="Holmes S.J."/>
            <person name="Howden P.J."/>
            <person name="Howe K.L."/>
            <person name="Howell G.R."/>
            <person name="Huckle E."/>
            <person name="Humphray S.J."/>
            <person name="Humphries M.D."/>
            <person name="Hunt A.R."/>
            <person name="Johnson C.M."/>
            <person name="Joy A.A."/>
            <person name="Kay M."/>
            <person name="Keenan S.J."/>
            <person name="Kimberley A.M."/>
            <person name="King A."/>
            <person name="Laird G.K."/>
            <person name="Langford C."/>
            <person name="Lawlor S."/>
            <person name="Leongamornlert D.A."/>
            <person name="Leversha M."/>
            <person name="Lloyd C.R."/>
            <person name="Lloyd D.M."/>
            <person name="Loveland J.E."/>
            <person name="Lovell J."/>
            <person name="Martin S."/>
            <person name="Mashreghi-Mohammadi M."/>
            <person name="Maslen G.L."/>
            <person name="Matthews L."/>
            <person name="McCann O.T."/>
            <person name="McLaren S.J."/>
            <person name="McLay K."/>
            <person name="McMurray A."/>
            <person name="Moore M.J.F."/>
            <person name="Mullikin J.C."/>
            <person name="Niblett D."/>
            <person name="Nickerson T."/>
            <person name="Novik K.L."/>
            <person name="Oliver K."/>
            <person name="Overton-Larty E.K."/>
            <person name="Parker A."/>
            <person name="Patel R."/>
            <person name="Pearce A.V."/>
            <person name="Peck A.I."/>
            <person name="Phillimore B.J.C.T."/>
            <person name="Phillips S."/>
            <person name="Plumb R.W."/>
            <person name="Porter K.M."/>
            <person name="Ramsey Y."/>
            <person name="Ranby S.A."/>
            <person name="Rice C.M."/>
            <person name="Ross M.T."/>
            <person name="Searle S.M."/>
            <person name="Sehra H.K."/>
            <person name="Sheridan E."/>
            <person name="Skuce C.D."/>
            <person name="Smith S."/>
            <person name="Smith M."/>
            <person name="Spraggon L."/>
            <person name="Squares S.L."/>
            <person name="Steward C.A."/>
            <person name="Sycamore N."/>
            <person name="Tamlyn-Hall G."/>
            <person name="Tester J."/>
            <person name="Theaker A.J."/>
            <person name="Thomas D.W."/>
            <person name="Thorpe A."/>
            <person name="Tracey A."/>
            <person name="Tromans A."/>
            <person name="Tubby B."/>
            <person name="Wall M."/>
            <person name="Wallis J.M."/>
            <person name="West A.P."/>
            <person name="White S.S."/>
            <person name="Whitehead S.L."/>
            <person name="Whittaker H."/>
            <person name="Wild A."/>
            <person name="Willey D.J."/>
            <person name="Wilmer T.E."/>
            <person name="Wood J.M."/>
            <person name="Wray P.W."/>
            <person name="Wyatt J.C."/>
            <person name="Young L."/>
            <person name="Younger R.M."/>
            <person name="Bentley D.R."/>
            <person name="Coulson A."/>
            <person name="Durbin R.M."/>
            <person name="Hubbard T."/>
            <person name="Sulston J.E."/>
            <person name="Dunham I."/>
            <person name="Rogers J."/>
            <person name="Beck S."/>
        </authorList>
    </citation>
    <scope>NUCLEOTIDE SEQUENCE [LARGE SCALE GENOMIC DNA]</scope>
</reference>
<reference key="3">
    <citation type="journal article" date="2004" name="Genome Res.">
        <title>The status, quality, and expansion of the NIH full-length cDNA project: the Mammalian Gene Collection (MGC).</title>
        <authorList>
            <consortium name="The MGC Project Team"/>
        </authorList>
    </citation>
    <scope>NUCLEOTIDE SEQUENCE [LARGE SCALE MRNA]</scope>
    <source>
        <tissue>Kidney</tissue>
        <tissue>Lung</tissue>
    </source>
</reference>
<reference key="4">
    <citation type="journal article" date="2002" name="Mol. Cell. Biol.">
        <title>A human mitochondrial transcription factor is related to RNA adenine methyltransferases and binds S-adenosylmethionine.</title>
        <authorList>
            <person name="McCulloch V."/>
            <person name="Seidel-Rogol B.L."/>
            <person name="Shadel G.S."/>
        </authorList>
    </citation>
    <scope>FUNCTION</scope>
    <scope>SUBCELLULAR LOCATION</scope>
    <scope>DNA-BINDING</scope>
    <scope>S-ADENOSYL-L-METHIONINE-BINDING</scope>
</reference>
<reference key="5">
    <citation type="journal article" date="2002" name="Nat. Genet.">
        <title>Mitochondrial transcription factors B1 and B2 activate transcription of human mtDNA.</title>
        <authorList>
            <person name="Falkenberg M."/>
            <person name="Gaspari M."/>
            <person name="Rantanen A."/>
            <person name="Trifunovic A."/>
            <person name="Larsson N.-G."/>
            <person name="Gustafsson C.M."/>
        </authorList>
    </citation>
    <scope>FUNCTION</scope>
    <scope>TISSUE SPECIFICITY</scope>
    <scope>INTERACTION WITH POLRMT</scope>
</reference>
<reference key="6">
    <citation type="journal article" date="2003" name="Mol. Cell. Biol.">
        <title>Human mitochondrial transcription factor B1 interacts with the C-terminal activation region of h-mtTFA and stimulates transcription independently of its RNA methyltransferase activity.</title>
        <authorList>
            <person name="McCulloch V."/>
            <person name="Shadel G.S."/>
        </authorList>
    </citation>
    <scope>FUNCTION</scope>
    <scope>INTERACTION WITH TFAM</scope>
    <scope>MUTAGENESIS OF GLY-65; ASN-141 AND LYS-220</scope>
</reference>
<reference key="7">
    <citation type="journal article" date="2003" name="Nat. Genet.">
        <title>Human mitochondrial transcription factor B1 methylates ribosomal RNA at a conserved stem-loop.</title>
        <authorList>
            <person name="Seidel-Rogol B.L."/>
            <person name="McCulloch V."/>
            <person name="Shadel G.S."/>
        </authorList>
    </citation>
    <scope>FUNCTION</scope>
    <scope>CATALYTIC ACTIVITY</scope>
    <scope>MUTAGENESIS OF GLY-65 AND LYS-220</scope>
</reference>
<reference key="8">
    <citation type="journal article" date="2004" name="Mol. Genet. Metab.">
        <title>Human mitochondrial transcription factor B1 as a modifier gene for hearing loss associated with the mitochondrial A1555G mutation.</title>
        <authorList>
            <person name="Bykhovskaya Y."/>
            <person name="Mengesha E."/>
            <person name="Wang D."/>
            <person name="Yang H."/>
            <person name="Estivill X."/>
            <person name="Shohat M."/>
            <person name="Fischel-Ghodsian N."/>
        </authorList>
    </citation>
    <scope>POSSIBLE INVOLVEMENT IN AMINOGLYCOSIDE-INDUCED DEAFNESS</scope>
</reference>
<reference key="9">
    <citation type="journal article" date="2005" name="Mol. Cell. Biol.">
        <title>Control of mitochondrial transcription specificity factors (TFB1M and TFB2M) by nuclear respiratory factors (NRF-1 and NRF-2) and PGC-1 family coactivators.</title>
        <authorList>
            <person name="Gleyzer N."/>
            <person name="Vercauteren K."/>
            <person name="Scarpulla R.C."/>
        </authorList>
    </citation>
    <scope>INDUCTION</scope>
</reference>
<reference key="10">
    <citation type="journal article" date="2011" name="BMC Syst. Biol.">
        <title>Initial characterization of the human central proteome.</title>
        <authorList>
            <person name="Burkard T.R."/>
            <person name="Planyavsky M."/>
            <person name="Kaupe I."/>
            <person name="Breitwieser F.P."/>
            <person name="Buerckstuemmer T."/>
            <person name="Bennett K.L."/>
            <person name="Superti-Furga G."/>
            <person name="Colinge J."/>
        </authorList>
    </citation>
    <scope>IDENTIFICATION BY MASS SPECTROMETRY [LARGE SCALE ANALYSIS]</scope>
</reference>
<reference key="11">
    <citation type="journal article" date="2012" name="Proc. Natl. Acad. Sci. U.S.A.">
        <title>N-terminal acetylome analyses and functional insights of the N-terminal acetyltransferase NatB.</title>
        <authorList>
            <person name="Van Damme P."/>
            <person name="Lasa M."/>
            <person name="Polevoda B."/>
            <person name="Gazquez C."/>
            <person name="Elosegui-Artola A."/>
            <person name="Kim D.S."/>
            <person name="De Juan-Pardo E."/>
            <person name="Demeyer K."/>
            <person name="Hole K."/>
            <person name="Larrea E."/>
            <person name="Timmerman E."/>
            <person name="Prieto J."/>
            <person name="Arnesen T."/>
            <person name="Sherman F."/>
            <person name="Gevaert K."/>
            <person name="Aldabe R."/>
        </authorList>
    </citation>
    <scope>IDENTIFICATION BY MASS SPECTROMETRY [LARGE SCALE ANALYSIS]</scope>
</reference>
<reference key="12">
    <citation type="journal article" date="2015" name="Proteomics">
        <title>N-terminome analysis of the human mitochondrial proteome.</title>
        <authorList>
            <person name="Vaca Jacome A.S."/>
            <person name="Rabilloud T."/>
            <person name="Schaeffer-Reiss C."/>
            <person name="Rompais M."/>
            <person name="Ayoub D."/>
            <person name="Lane L."/>
            <person name="Bairoch A."/>
            <person name="Van Dorsselaer A."/>
            <person name="Carapito C."/>
        </authorList>
    </citation>
    <scope>IDENTIFICATION BY MASS SPECTROMETRY [LARGE SCALE ANALYSIS]</scope>
</reference>
<reference key="13">
    <citation type="journal article" date="2015" name="Hum. Mol. Genet.">
        <title>Mitochondrial m.1584A 12S m62A rRNA methylation in families with m.1555A&gt;G associated hearing loss.</title>
        <authorList>
            <person name="O'Sullivan M."/>
            <person name="Rutland P."/>
            <person name="Lucas D."/>
            <person name="Ashton E."/>
            <person name="Hendricks S."/>
            <person name="Rahman S."/>
            <person name="Bitner-Glindzicz M."/>
        </authorList>
    </citation>
    <scope>FUNCTION</scope>
</reference>
<reference key="14">
    <citation type="journal article" date="2008" name="Dis. Markers">
        <title>Mitochondrial transcription factors TFA, TFB1 and TFB2: a search for DNA variants/haplotypes and the risk of cardiac hypertrophy.</title>
        <authorList>
            <person name="Alonso-Montes C."/>
            <person name="Castro M.G."/>
            <person name="Reguero J.R."/>
            <person name="Perrot A."/>
            <person name="Ozcelik C."/>
            <person name="Geier C."/>
            <person name="Posch M.G."/>
            <person name="Moris C."/>
            <person name="Alvarez V."/>
            <person name="Ruiz-Ortega M."/>
            <person name="Coto E."/>
        </authorList>
    </citation>
    <scope>VARIANTS PRO-120; ALA-211 AND GLN-256</scope>
</reference>
<reference evidence="15 16" key="15">
    <citation type="journal article" date="2019" name="Nucleic Acids Res.">
        <title>Structural insights into dimethylation of 12S rRNA by TFB1M: indispensable role in translation of mitochondrial genes and mitochondrial function.</title>
        <authorList>
            <person name="Liu X."/>
            <person name="Shen S."/>
            <person name="Wu P."/>
            <person name="Li F."/>
            <person name="Liu X."/>
            <person name="Wang C."/>
            <person name="Gong Q."/>
            <person name="Wu J."/>
            <person name="Yao X."/>
            <person name="Zhang H."/>
            <person name="Shi Y."/>
        </authorList>
    </citation>
    <scope>X-RAY CRYSTALLOGRAPHY (2.99 ANGSTROMS) OF 28-346 IN COMPLEX WITH S-ADENOSYL-L-METHIONINE AND 12S RRNA HELIX 45</scope>
    <scope>FUNCTION</scope>
    <scope>CATALYTIC ACTIVITY</scope>
    <scope>MUTAGENESIS OF GLU-85; LYS-86; ASP-111; VAL-112; ARG-183; ARG-256 AND ARG-257</scope>
</reference>
<reference evidence="17 18 19 20" key="16">
    <citation type="journal article" date="2023" name="Nature">
        <title>Principles of mitoribosomal small subunit assembly in eukaryotes.</title>
        <authorList>
            <person name="Harper N.J."/>
            <person name="Burnside C."/>
            <person name="Klinge S."/>
        </authorList>
    </citation>
    <scope>STRUCTURE BY ELECTRON MICROSCOPY (2.54 ANGSTROMS) IN COMPLEX WITH MITOCHONDRIAL SMALL SUBUNIT ASSEMBLY INTERMEDIATES</scope>
</reference>
<feature type="transit peptide" description="Mitochondrion" evidence="2">
    <location>
        <begin position="1"/>
        <end position="27"/>
    </location>
</feature>
<feature type="chain" id="PRO_0000273171" description="Dimethyladenosine transferase 1, mitochondrial">
    <location>
        <begin position="28"/>
        <end position="346"/>
    </location>
</feature>
<feature type="binding site" evidence="11 15">
    <location>
        <position position="38"/>
    </location>
    <ligand>
        <name>S-adenosyl-L-methionine</name>
        <dbReference type="ChEBI" id="CHEBI:59789"/>
    </ligand>
</feature>
<feature type="binding site" evidence="11 15">
    <location>
        <position position="63"/>
    </location>
    <ligand>
        <name>S-adenosyl-L-methionine</name>
        <dbReference type="ChEBI" id="CHEBI:59789"/>
    </ligand>
</feature>
<feature type="binding site" evidence="11 15">
    <location>
        <position position="85"/>
    </location>
    <ligand>
        <name>S-adenosyl-L-methionine</name>
        <dbReference type="ChEBI" id="CHEBI:59789"/>
    </ligand>
</feature>
<feature type="binding site" evidence="1">
    <location>
        <position position="86"/>
    </location>
    <ligand>
        <name>S-adenosyl-L-methionine</name>
        <dbReference type="ChEBI" id="CHEBI:59789"/>
    </ligand>
</feature>
<feature type="binding site" evidence="11 15">
    <location>
        <position position="111"/>
    </location>
    <ligand>
        <name>S-adenosyl-L-methionine</name>
        <dbReference type="ChEBI" id="CHEBI:59789"/>
    </ligand>
</feature>
<feature type="binding site" evidence="11 15">
    <location>
        <position position="112"/>
    </location>
    <ligand>
        <name>S-adenosyl-L-methionine</name>
        <dbReference type="ChEBI" id="CHEBI:59789"/>
    </ligand>
</feature>
<feature type="binding site" evidence="11 15">
    <location>
        <position position="141"/>
    </location>
    <ligand>
        <name>S-adenosyl-L-methionine</name>
        <dbReference type="ChEBI" id="CHEBI:59789"/>
    </ligand>
</feature>
<feature type="sequence variant" id="VAR_071246" description="In dbSNP:rs144355958." evidence="9">
    <original>A</original>
    <variation>P</variation>
    <location>
        <position position="120"/>
    </location>
</feature>
<feature type="sequence variant" id="VAR_071247" description="In dbSNP:rs769497533." evidence="9">
    <original>T</original>
    <variation>A</variation>
    <location>
        <position position="211"/>
    </location>
</feature>
<feature type="sequence variant" id="VAR_071248" description="In dbSNP:rs73579353." evidence="9">
    <original>R</original>
    <variation>Q</variation>
    <location>
        <position position="256"/>
    </location>
</feature>
<feature type="mutagenesis site" description="Abolishes methyltransferase activity, DNA-binding and SAM-binding. Does not abolish transcription activator function." evidence="5 6">
    <original>G</original>
    <variation>A</variation>
    <location>
        <position position="65"/>
    </location>
</feature>
<feature type="mutagenesis site" description="Inhibits rRNA (adenine-N6,N6-)-dimethyltransferase activity." evidence="11">
    <original>E</original>
    <variation>A</variation>
    <location>
        <position position="85"/>
    </location>
</feature>
<feature type="mutagenesis site" description="Inhibits rRNA (adenine-N6,N6-)-dimethyltransferase activity." evidence="11">
    <original>K</original>
    <variation>A</variation>
    <location>
        <position position="86"/>
    </location>
</feature>
<feature type="mutagenesis site" description="Inhibits rRNA (adenine-N6,N6-)-dimethyltransferase activity." evidence="11">
    <original>D</original>
    <variation>A</variation>
    <location>
        <position position="111"/>
    </location>
</feature>
<feature type="mutagenesis site" description="Inhibits rRNA (adenine-N6,N6-)-dimethyltransferase activity." evidence="11">
    <original>V</original>
    <variation>A</variation>
    <location>
        <position position="112"/>
    </location>
</feature>
<feature type="mutagenesis site" description="Does not affect SAM-binding, DNA-binding nor transcription activator function." evidence="6">
    <original>N</original>
    <variation>A</variation>
    <location>
        <position position="141"/>
    </location>
</feature>
<feature type="mutagenesis site" description="Abolishes the interaction between 12S helix 45 and TFB1M; when associated with E-256 and E-257." evidence="11">
    <original>R</original>
    <variation>E</variation>
    <location>
        <position position="183"/>
    </location>
</feature>
<feature type="mutagenesis site" description="Abolishes methyltransferase activity. Does not affect SAM-binding, DNA-binding nor transcription activator function." evidence="5 6">
    <original>K</original>
    <variation>A</variation>
    <location>
        <position position="220"/>
    </location>
</feature>
<feature type="mutagenesis site" description="Abolishes the interaction between 12S helix 45 and TFB1M; when associated with E-183 and E-257." evidence="11">
    <original>R</original>
    <variation>E</variation>
    <location>
        <position position="256"/>
    </location>
</feature>
<feature type="mutagenesis site" description="Abolishes the interaction between 12S helix 45 and TFB1M; when associated with E-183 and E-256." evidence="11">
    <original>R</original>
    <variation>E</variation>
    <location>
        <position position="257"/>
    </location>
</feature>
<feature type="sequence conflict" description="In Ref. 1; AAD34070." evidence="13" ref="1">
    <original>KQ</original>
    <variation>NE</variation>
    <location>
        <begin position="31"/>
        <end position="32"/>
    </location>
</feature>
<feature type="helix" evidence="23">
    <location>
        <begin position="18"/>
        <end position="24"/>
    </location>
</feature>
<feature type="strand" evidence="23">
    <location>
        <begin position="29"/>
        <end position="31"/>
    </location>
</feature>
<feature type="helix" evidence="23">
    <location>
        <begin position="41"/>
        <end position="50"/>
    </location>
</feature>
<feature type="strand" evidence="23">
    <location>
        <begin position="58"/>
        <end position="62"/>
    </location>
</feature>
<feature type="helix" evidence="23">
    <location>
        <begin position="68"/>
        <end position="75"/>
    </location>
</feature>
<feature type="strand" evidence="23">
    <location>
        <begin position="79"/>
        <end position="86"/>
    </location>
</feature>
<feature type="helix" evidence="23">
    <location>
        <begin position="88"/>
        <end position="90"/>
    </location>
</feature>
<feature type="helix" evidence="23">
    <location>
        <begin position="91"/>
        <end position="100"/>
    </location>
</feature>
<feature type="turn" evidence="22">
    <location>
        <begin position="102"/>
        <end position="104"/>
    </location>
</feature>
<feature type="strand" evidence="23">
    <location>
        <begin position="106"/>
        <end position="110"/>
    </location>
</feature>
<feature type="turn" evidence="23">
    <location>
        <begin position="112"/>
        <end position="114"/>
    </location>
</feature>
<feature type="helix" evidence="23">
    <location>
        <begin position="117"/>
        <end position="119"/>
    </location>
</feature>
<feature type="helix" evidence="24">
    <location>
        <begin position="123"/>
        <end position="125"/>
    </location>
</feature>
<feature type="strand" evidence="23">
    <location>
        <begin position="129"/>
        <end position="132"/>
    </location>
</feature>
<feature type="strand" evidence="23">
    <location>
        <begin position="135"/>
        <end position="140"/>
    </location>
</feature>
<feature type="helix" evidence="23">
    <location>
        <begin position="144"/>
        <end position="160"/>
    </location>
</feature>
<feature type="helix" evidence="23">
    <location>
        <begin position="163"/>
        <end position="166"/>
    </location>
</feature>
<feature type="strand" evidence="23">
    <location>
        <begin position="167"/>
        <end position="169"/>
    </location>
</feature>
<feature type="strand" evidence="23">
    <location>
        <begin position="171"/>
        <end position="177"/>
    </location>
</feature>
<feature type="helix" evidence="23">
    <location>
        <begin position="178"/>
        <end position="184"/>
    </location>
</feature>
<feature type="strand" evidence="21">
    <location>
        <begin position="190"/>
        <end position="192"/>
    </location>
</feature>
<feature type="helix" evidence="23">
    <location>
        <begin position="195"/>
        <end position="201"/>
    </location>
</feature>
<feature type="strand" evidence="23">
    <location>
        <begin position="204"/>
        <end position="212"/>
    </location>
</feature>
<feature type="helix" evidence="23">
    <location>
        <begin position="214"/>
        <end position="216"/>
    </location>
</feature>
<feature type="strand" evidence="23">
    <location>
        <begin position="217"/>
        <end position="219"/>
    </location>
</feature>
<feature type="strand" evidence="23">
    <location>
        <begin position="225"/>
        <end position="232"/>
    </location>
</feature>
<feature type="helix" evidence="23">
    <location>
        <begin position="242"/>
        <end position="253"/>
    </location>
</feature>
<feature type="helix" evidence="23">
    <location>
        <begin position="260"/>
        <end position="264"/>
    </location>
</feature>
<feature type="helix" evidence="23">
    <location>
        <begin position="265"/>
        <end position="267"/>
    </location>
</feature>
<feature type="helix" evidence="22">
    <location>
        <begin position="270"/>
        <end position="272"/>
    </location>
</feature>
<feature type="helix" evidence="23">
    <location>
        <begin position="273"/>
        <end position="284"/>
    </location>
</feature>
<feature type="helix" evidence="23">
    <location>
        <begin position="292"/>
        <end position="294"/>
    </location>
</feature>
<feature type="helix" evidence="23">
    <location>
        <begin position="297"/>
        <end position="312"/>
    </location>
</feature>
<feature type="helix" evidence="22">
    <location>
        <begin position="315"/>
        <end position="319"/>
    </location>
</feature>
<feature type="helix" evidence="23">
    <location>
        <begin position="322"/>
        <end position="327"/>
    </location>
</feature>
<dbReference type="EC" id="2.1.1.-" evidence="5"/>
<dbReference type="EMBL" id="AF151833">
    <property type="protein sequence ID" value="AAD34070.1"/>
    <property type="molecule type" value="mRNA"/>
</dbReference>
<dbReference type="EMBL" id="AL139101">
    <property type="status" value="NOT_ANNOTATED_CDS"/>
    <property type="molecule type" value="Genomic_DNA"/>
</dbReference>
<dbReference type="EMBL" id="BC005183">
    <property type="protein sequence ID" value="AAH05183.1"/>
    <property type="status" value="ALT_SEQ"/>
    <property type="molecule type" value="mRNA"/>
</dbReference>
<dbReference type="EMBL" id="BC017788">
    <property type="protein sequence ID" value="AAH17788.1"/>
    <property type="molecule type" value="mRNA"/>
</dbReference>
<dbReference type="CCDS" id="CCDS5248.1"/>
<dbReference type="RefSeq" id="NP_057104.2">
    <property type="nucleotide sequence ID" value="NM_016020.4"/>
</dbReference>
<dbReference type="PDB" id="6AAX">
    <property type="method" value="X-ray"/>
    <property type="resolution" value="2.99 A"/>
    <property type="chains" value="A/C=28-346"/>
</dbReference>
<dbReference type="PDB" id="6AJK">
    <property type="method" value="X-ray"/>
    <property type="resolution" value="3.00 A"/>
    <property type="chains" value="A=27-346"/>
</dbReference>
<dbReference type="PDB" id="8CSP">
    <property type="method" value="EM"/>
    <property type="resolution" value="2.66 A"/>
    <property type="chains" value="5=1-346"/>
</dbReference>
<dbReference type="PDB" id="8CSQ">
    <property type="method" value="EM"/>
    <property type="resolution" value="2.54 A"/>
    <property type="chains" value="5=1-346"/>
</dbReference>
<dbReference type="PDB" id="8CSR">
    <property type="method" value="EM"/>
    <property type="resolution" value="2.54 A"/>
    <property type="chains" value="5=1-346"/>
</dbReference>
<dbReference type="PDB" id="8CSU">
    <property type="method" value="EM"/>
    <property type="resolution" value="3.03 A"/>
    <property type="chains" value="5=1-346"/>
</dbReference>
<dbReference type="PDBsum" id="6AAX"/>
<dbReference type="PDBsum" id="6AJK"/>
<dbReference type="PDBsum" id="8CSP"/>
<dbReference type="PDBsum" id="8CSQ"/>
<dbReference type="PDBsum" id="8CSR"/>
<dbReference type="PDBsum" id="8CSU"/>
<dbReference type="EMDB" id="EMD-26966"/>
<dbReference type="EMDB" id="EMD-26967"/>
<dbReference type="EMDB" id="EMD-26968"/>
<dbReference type="EMDB" id="EMD-26971"/>
<dbReference type="SMR" id="Q8WVM0"/>
<dbReference type="BioGRID" id="119295">
    <property type="interactions" value="123"/>
</dbReference>
<dbReference type="FunCoup" id="Q8WVM0">
    <property type="interactions" value="283"/>
</dbReference>
<dbReference type="IntAct" id="Q8WVM0">
    <property type="interactions" value="50"/>
</dbReference>
<dbReference type="MINT" id="Q8WVM0"/>
<dbReference type="STRING" id="9606.ENSP00000356134"/>
<dbReference type="GlyGen" id="Q8WVM0">
    <property type="glycosylation" value="1 site, 1 O-linked glycan (1 site)"/>
</dbReference>
<dbReference type="iPTMnet" id="Q8WVM0"/>
<dbReference type="PhosphoSitePlus" id="Q8WVM0"/>
<dbReference type="SwissPalm" id="Q8WVM0"/>
<dbReference type="BioMuta" id="TFB1M"/>
<dbReference type="DMDM" id="74751555"/>
<dbReference type="jPOST" id="Q8WVM0"/>
<dbReference type="MassIVE" id="Q8WVM0"/>
<dbReference type="PaxDb" id="9606-ENSP00000356134"/>
<dbReference type="PeptideAtlas" id="Q8WVM0"/>
<dbReference type="ProteomicsDB" id="74803"/>
<dbReference type="Pumba" id="Q8WVM0"/>
<dbReference type="Antibodypedia" id="33417">
    <property type="antibodies" value="206 antibodies from 27 providers"/>
</dbReference>
<dbReference type="DNASU" id="51106"/>
<dbReference type="Ensembl" id="ENST00000367166.5">
    <property type="protein sequence ID" value="ENSP00000356134.4"/>
    <property type="gene ID" value="ENSG00000029639.11"/>
</dbReference>
<dbReference type="GeneID" id="51106"/>
<dbReference type="KEGG" id="hsa:51106"/>
<dbReference type="MANE-Select" id="ENST00000367166.5">
    <property type="protein sequence ID" value="ENSP00000356134.4"/>
    <property type="RefSeq nucleotide sequence ID" value="NM_016020.4"/>
    <property type="RefSeq protein sequence ID" value="NP_057104.2"/>
</dbReference>
<dbReference type="UCSC" id="uc003qqj.5">
    <property type="organism name" value="human"/>
</dbReference>
<dbReference type="AGR" id="HGNC:17037"/>
<dbReference type="CTD" id="51106"/>
<dbReference type="DisGeNET" id="51106"/>
<dbReference type="GeneCards" id="TFB1M"/>
<dbReference type="HGNC" id="HGNC:17037">
    <property type="gene designation" value="TFB1M"/>
</dbReference>
<dbReference type="HPA" id="ENSG00000029639">
    <property type="expression patterns" value="Low tissue specificity"/>
</dbReference>
<dbReference type="MalaCards" id="TFB1M"/>
<dbReference type="MIM" id="607033">
    <property type="type" value="gene"/>
</dbReference>
<dbReference type="neXtProt" id="NX_Q8WVM0"/>
<dbReference type="OpenTargets" id="ENSG00000029639"/>
<dbReference type="Orphanet" id="90641">
    <property type="disease" value="Rare mitochondrial non-syndromic sensorineural deafness"/>
</dbReference>
<dbReference type="PharmGKB" id="PA38198"/>
<dbReference type="VEuPathDB" id="HostDB:ENSG00000029639"/>
<dbReference type="eggNOG" id="KOG0821">
    <property type="taxonomic scope" value="Eukaryota"/>
</dbReference>
<dbReference type="GeneTree" id="ENSGT00950000183142"/>
<dbReference type="HOGENOM" id="CLU_041220_7_0_1"/>
<dbReference type="InParanoid" id="Q8WVM0"/>
<dbReference type="OMA" id="RIEQPFK"/>
<dbReference type="OrthoDB" id="16079at2759"/>
<dbReference type="PAN-GO" id="Q8WVM0">
    <property type="GO annotations" value="5 GO annotations based on evolutionary models"/>
</dbReference>
<dbReference type="PhylomeDB" id="Q8WVM0"/>
<dbReference type="TreeFam" id="TF300798"/>
<dbReference type="PathwayCommons" id="Q8WVM0"/>
<dbReference type="Reactome" id="R-HSA-2151201">
    <property type="pathway name" value="Transcriptional activation of mitochondrial biogenesis"/>
</dbReference>
<dbReference type="Reactome" id="R-HSA-6793080">
    <property type="pathway name" value="rRNA modification in the mitochondrion"/>
</dbReference>
<dbReference type="SignaLink" id="Q8WVM0"/>
<dbReference type="BioGRID-ORCS" id="51106">
    <property type="hits" value="182 hits in 1159 CRISPR screens"/>
</dbReference>
<dbReference type="CD-CODE" id="5965E019">
    <property type="entry name" value="mtRNA granule"/>
</dbReference>
<dbReference type="ChiTaRS" id="TFB1M">
    <property type="organism name" value="human"/>
</dbReference>
<dbReference type="GeneWiki" id="TFB1M"/>
<dbReference type="GenomeRNAi" id="51106"/>
<dbReference type="Pharos" id="Q8WVM0">
    <property type="development level" value="Tbio"/>
</dbReference>
<dbReference type="PRO" id="PR:Q8WVM0"/>
<dbReference type="Proteomes" id="UP000005640">
    <property type="component" value="Chromosome 6"/>
</dbReference>
<dbReference type="RNAct" id="Q8WVM0">
    <property type="molecule type" value="protein"/>
</dbReference>
<dbReference type="Bgee" id="ENSG00000029639">
    <property type="expression patterns" value="Expressed in right adrenal gland and 182 other cell types or tissues"/>
</dbReference>
<dbReference type="ExpressionAtlas" id="Q8WVM0">
    <property type="expression patterns" value="baseline and differential"/>
</dbReference>
<dbReference type="GO" id="GO:0005759">
    <property type="term" value="C:mitochondrial matrix"/>
    <property type="evidence" value="ECO:0000318"/>
    <property type="project" value="GO_Central"/>
</dbReference>
<dbReference type="GO" id="GO:0042645">
    <property type="term" value="C:mitochondrial nucleoid"/>
    <property type="evidence" value="ECO:0000314"/>
    <property type="project" value="BHF-UCL"/>
</dbReference>
<dbReference type="GO" id="GO:0005739">
    <property type="term" value="C:mitochondrion"/>
    <property type="evidence" value="ECO:0006056"/>
    <property type="project" value="FlyBase"/>
</dbReference>
<dbReference type="GO" id="GO:0003677">
    <property type="term" value="F:DNA binding"/>
    <property type="evidence" value="ECO:0007669"/>
    <property type="project" value="UniProtKB-KW"/>
</dbReference>
<dbReference type="GO" id="GO:0034246">
    <property type="term" value="F:mitochondrial transcription factor activity"/>
    <property type="evidence" value="ECO:0000318"/>
    <property type="project" value="GO_Central"/>
</dbReference>
<dbReference type="GO" id="GO:0003723">
    <property type="term" value="F:RNA binding"/>
    <property type="evidence" value="ECO:0007005"/>
    <property type="project" value="UniProtKB"/>
</dbReference>
<dbReference type="GO" id="GO:0000179">
    <property type="term" value="F:rRNA (adenine-N6,N6-)-dimethyltransferase activity"/>
    <property type="evidence" value="ECO:0000314"/>
    <property type="project" value="UniProtKB"/>
</dbReference>
<dbReference type="GO" id="GO:1904047">
    <property type="term" value="F:S-adenosyl-L-methionine binding"/>
    <property type="evidence" value="ECO:0000314"/>
    <property type="project" value="UniProtKB"/>
</dbReference>
<dbReference type="GO" id="GO:0031167">
    <property type="term" value="P:rRNA methylation"/>
    <property type="evidence" value="ECO:0000314"/>
    <property type="project" value="UniProtKB"/>
</dbReference>
<dbReference type="GO" id="GO:0000154">
    <property type="term" value="P:rRNA modification"/>
    <property type="evidence" value="ECO:0000304"/>
    <property type="project" value="Reactome"/>
</dbReference>
<dbReference type="GO" id="GO:0006391">
    <property type="term" value="P:transcription initiation at mitochondrial promoter"/>
    <property type="evidence" value="ECO:0000318"/>
    <property type="project" value="GO_Central"/>
</dbReference>
<dbReference type="CDD" id="cd02440">
    <property type="entry name" value="AdoMet_MTases"/>
    <property type="match status" value="1"/>
</dbReference>
<dbReference type="FunFam" id="1.10.8.100:FF:000004">
    <property type="entry name" value="rRNA adenine N(6)-methyltransferase"/>
    <property type="match status" value="1"/>
</dbReference>
<dbReference type="FunFam" id="3.40.50.150:FF:000109">
    <property type="entry name" value="rRNA adenine N(6)-methyltransferase"/>
    <property type="match status" value="1"/>
</dbReference>
<dbReference type="Gene3D" id="1.10.8.100">
    <property type="entry name" value="Ribosomal RNA adenine dimethylase-like, domain 2"/>
    <property type="match status" value="1"/>
</dbReference>
<dbReference type="Gene3D" id="3.40.50.150">
    <property type="entry name" value="Vaccinia Virus protein VP39"/>
    <property type="match status" value="1"/>
</dbReference>
<dbReference type="HAMAP" id="MF_00607">
    <property type="entry name" value="16SrRNA_methyltr_A"/>
    <property type="match status" value="1"/>
</dbReference>
<dbReference type="InterPro" id="IPR001737">
    <property type="entry name" value="KsgA/Erm"/>
</dbReference>
<dbReference type="InterPro" id="IPR023165">
    <property type="entry name" value="rRNA_Ade_diMease-like_C"/>
</dbReference>
<dbReference type="InterPro" id="IPR020596">
    <property type="entry name" value="rRNA_Ade_Mease_Trfase_CS"/>
</dbReference>
<dbReference type="InterPro" id="IPR020598">
    <property type="entry name" value="rRNA_Ade_methylase_Trfase_N"/>
</dbReference>
<dbReference type="InterPro" id="IPR011530">
    <property type="entry name" value="rRNA_adenine_dimethylase"/>
</dbReference>
<dbReference type="InterPro" id="IPR029063">
    <property type="entry name" value="SAM-dependent_MTases_sf"/>
</dbReference>
<dbReference type="NCBIfam" id="TIGR00755">
    <property type="entry name" value="ksgA"/>
    <property type="match status" value="1"/>
</dbReference>
<dbReference type="PANTHER" id="PTHR11727">
    <property type="entry name" value="DIMETHYLADENOSINE TRANSFERASE"/>
    <property type="match status" value="1"/>
</dbReference>
<dbReference type="PANTHER" id="PTHR11727:SF17">
    <property type="entry name" value="DIMETHYLADENOSINE TRANSFERASE 1, MITOCHONDRIAL"/>
    <property type="match status" value="1"/>
</dbReference>
<dbReference type="Pfam" id="PF00398">
    <property type="entry name" value="RrnaAD"/>
    <property type="match status" value="1"/>
</dbReference>
<dbReference type="SMART" id="SM00650">
    <property type="entry name" value="rADc"/>
    <property type="match status" value="1"/>
</dbReference>
<dbReference type="SUPFAM" id="SSF53335">
    <property type="entry name" value="S-adenosyl-L-methionine-dependent methyltransferases"/>
    <property type="match status" value="1"/>
</dbReference>
<dbReference type="PROSITE" id="PS01131">
    <property type="entry name" value="RRNA_A_DIMETH"/>
    <property type="match status" value="1"/>
</dbReference>
<dbReference type="PROSITE" id="PS51689">
    <property type="entry name" value="SAM_RNA_A_N6_MT"/>
    <property type="match status" value="1"/>
</dbReference>
<keyword id="KW-0002">3D-structure</keyword>
<keyword id="KW-0238">DNA-binding</keyword>
<keyword id="KW-0489">Methyltransferase</keyword>
<keyword id="KW-0496">Mitochondrion</keyword>
<keyword id="KW-1267">Proteomics identification</keyword>
<keyword id="KW-1185">Reference proteome</keyword>
<keyword id="KW-0694">RNA-binding</keyword>
<keyword id="KW-0698">rRNA processing</keyword>
<keyword id="KW-0949">S-adenosyl-L-methionine</keyword>
<keyword id="KW-0804">Transcription</keyword>
<keyword id="KW-0805">Transcription regulation</keyword>
<keyword id="KW-0808">Transferase</keyword>
<keyword id="KW-0809">Transit peptide</keyword>
<accession>Q8WVM0</accession>
<accession>Q05DR0</accession>
<accession>Q9Y384</accession>
<evidence type="ECO:0000250" key="1">
    <source>
        <dbReference type="UniProtKB" id="Q8JZM0"/>
    </source>
</evidence>
<evidence type="ECO:0000255" key="2"/>
<evidence type="ECO:0000269" key="3">
    <source>
    </source>
</evidence>
<evidence type="ECO:0000269" key="4">
    <source>
    </source>
</evidence>
<evidence type="ECO:0000269" key="5">
    <source>
    </source>
</evidence>
<evidence type="ECO:0000269" key="6">
    <source>
    </source>
</evidence>
<evidence type="ECO:0000269" key="7">
    <source>
    </source>
</evidence>
<evidence type="ECO:0000269" key="8">
    <source>
    </source>
</evidence>
<evidence type="ECO:0000269" key="9">
    <source>
    </source>
</evidence>
<evidence type="ECO:0000269" key="10">
    <source>
    </source>
</evidence>
<evidence type="ECO:0000269" key="11">
    <source>
    </source>
</evidence>
<evidence type="ECO:0000303" key="12">
    <source>
    </source>
</evidence>
<evidence type="ECO:0000305" key="13"/>
<evidence type="ECO:0000312" key="14">
    <source>
        <dbReference type="HGNC" id="HGNC:17037"/>
    </source>
</evidence>
<evidence type="ECO:0007744" key="15">
    <source>
        <dbReference type="PDB" id="6AAX"/>
    </source>
</evidence>
<evidence type="ECO:0007744" key="16">
    <source>
        <dbReference type="PDB" id="6AJK"/>
    </source>
</evidence>
<evidence type="ECO:0007744" key="17">
    <source>
        <dbReference type="PDB" id="8CSP"/>
    </source>
</evidence>
<evidence type="ECO:0007744" key="18">
    <source>
        <dbReference type="PDB" id="8CSQ"/>
    </source>
</evidence>
<evidence type="ECO:0007744" key="19">
    <source>
        <dbReference type="PDB" id="8CSR"/>
    </source>
</evidence>
<evidence type="ECO:0007744" key="20">
    <source>
        <dbReference type="PDB" id="8CSU"/>
    </source>
</evidence>
<evidence type="ECO:0007829" key="21">
    <source>
        <dbReference type="PDB" id="6AJK"/>
    </source>
</evidence>
<evidence type="ECO:0007829" key="22">
    <source>
        <dbReference type="PDB" id="8CSP"/>
    </source>
</evidence>
<evidence type="ECO:0007829" key="23">
    <source>
        <dbReference type="PDB" id="8CSQ"/>
    </source>
</evidence>
<evidence type="ECO:0007829" key="24">
    <source>
        <dbReference type="PDB" id="8CSR"/>
    </source>
</evidence>
<proteinExistence type="evidence at protein level"/>
<name>TFB1M_HUMAN</name>
<sequence length="346" mass="39543">MAASGKLSTCRLPPLPTIREIIKLLRLQAAKQLSQNFLLDLRLTDKIVRKAGNLTNAYVYEVGPGPGGITRSILNADVAELLVVEKDTRFIPGLQMLSDAAPGKLRIVHGDVLTFKVEKAFSESLKRPWEDDPPNVHIIGNLPFSVSTPLIIKWLENISCRDGPFVYGRTQMTLTFQKEVAERLAANTGSKQRSRLSVMAQYLCNVRHIFTIPGQAFVPKPEVDVGVVHFTPLIQPKIEQPFKLVEKVVQNVFQFRRKYCHRGLRMLFPEAQRLESTGRLLELADIDPTLRPRQLSISHFKSLCDVYRKMCDEDPQLFAYNFREELKRRKSKNEEKEEDDAENYRL</sequence>
<comment type="function">
    <text evidence="3 4 5 6 10 11">Mitochondrial methyltransferase which uses S-adenosyl methionine to dimethylate two highly conserved adjacent adenosine residues (A1583 and A1584) within the loop of helix 45 at the 3-prime end of 12S rRNA, thereby regulating the assembly or stability of the small subunit of the mitochondrial ribosome (PubMed:12496758, PubMed:25305075, PubMed:31251801). Also required for basal transcription of mitochondrial DNA, probably via its interaction with POLRMT and TFAM. Stimulates transcription independently of the methyltransferase activity (PubMed:11809803, PubMed:12068295, PubMed:12897151).</text>
</comment>
<comment type="catalytic activity">
    <reaction evidence="5 11">
        <text>adenosine(N)/adenosine(N+1) in rRNA + 4 S-adenosyl-L-methionine = N(6)-dimethyladenosine(N)/N(6)-dimethyladenosine(N+1) in rRNA + 4 S-adenosyl-L-homocysteine + 4 H(+)</text>
        <dbReference type="Rhea" id="RHEA:78527"/>
        <dbReference type="Rhea" id="RHEA-COMP:19105"/>
        <dbReference type="Rhea" id="RHEA-COMP:19106"/>
        <dbReference type="ChEBI" id="CHEBI:15378"/>
        <dbReference type="ChEBI" id="CHEBI:57856"/>
        <dbReference type="ChEBI" id="CHEBI:59789"/>
        <dbReference type="ChEBI" id="CHEBI:74411"/>
        <dbReference type="ChEBI" id="CHEBI:74493"/>
    </reaction>
</comment>
<comment type="subunit">
    <text evidence="1 4 6">Interacts with mitochondrial RNA polymerase POLRMT. Interacts with TFAM (PubMed:12068295, PubMed:12897151). Bound to the maturing mtSSU until the late stages of assembly (By similarity).</text>
</comment>
<comment type="interaction">
    <interactant intactId="EBI-2615570">
        <id>Q8WVM0</id>
    </interactant>
    <interactant intactId="EBI-1049924">
        <id>Q00059</id>
        <label>TFAM</label>
    </interactant>
    <organismsDiffer>false</organismsDiffer>
    <experiments>2</experiments>
</comment>
<comment type="subcellular location">
    <subcellularLocation>
        <location evidence="3">Mitochondrion</location>
    </subcellularLocation>
</comment>
<comment type="tissue specificity">
    <text evidence="4">Ubiquitously expressed.</text>
</comment>
<comment type="induction">
    <text evidence="8">By the nuclear respiratory factors NRF1 and NRF2/GABPB2 and PGC-1 coactivators.</text>
</comment>
<comment type="miscellaneous">
    <text evidence="7 10">It has been proposed that variations in TFB1M may influence the clinical expression of aminoglycoside-induced deafness caused by the A1555G mutation in the mitochondrial 12S rRNA (PubMed:15110318). However, this was later questioned as patients with the A1555G mutation had similar 12S rRNA methylation levels to controls (PubMed:25305075).</text>
</comment>
<comment type="similarity">
    <text evidence="13">Belongs to the class I-like SAM-binding methyltransferase superfamily. rRNA adenine N(6)-methyltransferase family. KsgA subfamily.</text>
</comment>
<comment type="sequence caution" evidence="13">
    <conflict type="miscellaneous discrepancy">
        <sequence resource="EMBL-CDS" id="AAH05183"/>
    </conflict>
    <text>Contaminating sequence. Potential poly-A sequence.</text>
</comment>
<organism>
    <name type="scientific">Homo sapiens</name>
    <name type="common">Human</name>
    <dbReference type="NCBI Taxonomy" id="9606"/>
    <lineage>
        <taxon>Eukaryota</taxon>
        <taxon>Metazoa</taxon>
        <taxon>Chordata</taxon>
        <taxon>Craniata</taxon>
        <taxon>Vertebrata</taxon>
        <taxon>Euteleostomi</taxon>
        <taxon>Mammalia</taxon>
        <taxon>Eutheria</taxon>
        <taxon>Euarchontoglires</taxon>
        <taxon>Primates</taxon>
        <taxon>Haplorrhini</taxon>
        <taxon>Catarrhini</taxon>
        <taxon>Hominidae</taxon>
        <taxon>Homo</taxon>
    </lineage>
</organism>
<protein>
    <recommendedName>
        <fullName>Dimethyladenosine transferase 1, mitochondrial</fullName>
        <ecNumber evidence="5">2.1.1.-</ecNumber>
    </recommendedName>
    <alternativeName>
        <fullName>Mitochondrial 12S rRNA dimethylase 1</fullName>
    </alternativeName>
    <alternativeName>
        <fullName>Mitochondrial transcription factor B1</fullName>
        <shortName>h-mtTFB</shortName>
        <shortName>h-mtTFB1</shortName>
        <shortName>hTFB1M</shortName>
        <shortName>mtTFB1</shortName>
    </alternativeName>
    <alternativeName>
        <fullName>S-adenosylmethionine-6-N', N'-adenosyl(rRNA) dimethyltransferase 1</fullName>
    </alternativeName>
</protein>